<proteinExistence type="inferred from homology"/>
<evidence type="ECO:0000255" key="1">
    <source>
        <dbReference type="HAMAP-Rule" id="MF_01436"/>
    </source>
</evidence>
<gene>
    <name evidence="1" type="primary">entS</name>
    <name type="ordered locus">SPA2141</name>
</gene>
<feature type="chain" id="PRO_0000227652" description="Enterobactin exporter EntS">
    <location>
        <begin position="1"/>
        <end position="414"/>
    </location>
</feature>
<feature type="topological domain" description="Cytoplasmic" evidence="1">
    <location>
        <begin position="1"/>
        <end position="21"/>
    </location>
</feature>
<feature type="transmembrane region" description="Helical" evidence="1">
    <location>
        <begin position="22"/>
        <end position="42"/>
    </location>
</feature>
<feature type="topological domain" description="Periplasmic" evidence="1">
    <location>
        <begin position="43"/>
        <end position="55"/>
    </location>
</feature>
<feature type="transmembrane region" description="Helical" evidence="1">
    <location>
        <begin position="56"/>
        <end position="76"/>
    </location>
</feature>
<feature type="topological domain" description="Cytoplasmic" evidence="1">
    <location>
        <begin position="77"/>
        <end position="83"/>
    </location>
</feature>
<feature type="transmembrane region" description="Helical" evidence="1">
    <location>
        <begin position="84"/>
        <end position="104"/>
    </location>
</feature>
<feature type="topological domain" description="Periplasmic" evidence="1">
    <location>
        <begin position="105"/>
        <end position="109"/>
    </location>
</feature>
<feature type="transmembrane region" description="Helical" evidence="1">
    <location>
        <begin position="110"/>
        <end position="130"/>
    </location>
</feature>
<feature type="topological domain" description="Cytoplasmic" evidence="1">
    <location>
        <begin position="131"/>
        <end position="156"/>
    </location>
</feature>
<feature type="transmembrane region" description="Helical" evidence="1">
    <location>
        <begin position="157"/>
        <end position="177"/>
    </location>
</feature>
<feature type="topological domain" description="Periplasmic" evidence="1">
    <location>
        <position position="178"/>
    </location>
</feature>
<feature type="transmembrane region" description="Helical" evidence="1">
    <location>
        <begin position="179"/>
        <end position="199"/>
    </location>
</feature>
<feature type="topological domain" description="Cytoplasmic" evidence="1">
    <location>
        <begin position="200"/>
        <end position="218"/>
    </location>
</feature>
<feature type="transmembrane region" description="Helical" evidence="1">
    <location>
        <begin position="219"/>
        <end position="239"/>
    </location>
</feature>
<feature type="topological domain" description="Periplasmic" evidence="1">
    <location>
        <begin position="240"/>
        <end position="256"/>
    </location>
</feature>
<feature type="transmembrane region" description="Helical" evidence="1">
    <location>
        <begin position="257"/>
        <end position="277"/>
    </location>
</feature>
<feature type="topological domain" description="Cytoplasmic" evidence="1">
    <location>
        <begin position="278"/>
        <end position="287"/>
    </location>
</feature>
<feature type="transmembrane region" description="Helical" evidence="1">
    <location>
        <begin position="288"/>
        <end position="307"/>
    </location>
</feature>
<feature type="topological domain" description="Periplasmic" evidence="1">
    <location>
        <begin position="308"/>
        <end position="313"/>
    </location>
</feature>
<feature type="transmembrane region" description="Helical" evidence="1">
    <location>
        <begin position="314"/>
        <end position="336"/>
    </location>
</feature>
<feature type="topological domain" description="Cytoplasmic" evidence="1">
    <location>
        <begin position="337"/>
        <end position="356"/>
    </location>
</feature>
<feature type="transmembrane region" description="Helical" evidence="1">
    <location>
        <begin position="357"/>
        <end position="377"/>
    </location>
</feature>
<feature type="topological domain" description="Periplasmic" evidence="1">
    <location>
        <position position="378"/>
    </location>
</feature>
<feature type="transmembrane region" description="Helical" evidence="1">
    <location>
        <begin position="379"/>
        <end position="399"/>
    </location>
</feature>
<feature type="topological domain" description="Cytoplasmic" evidence="1">
    <location>
        <begin position="400"/>
        <end position="414"/>
    </location>
</feature>
<comment type="function">
    <text evidence="1">Component of an export pathway for enterobactin.</text>
</comment>
<comment type="subcellular location">
    <subcellularLocation>
        <location evidence="1">Cell inner membrane</location>
        <topology evidence="1">Multi-pass membrane protein</topology>
    </subcellularLocation>
</comment>
<comment type="similarity">
    <text evidence="1">Belongs to the major facilitator superfamily. EntS (TC 2.A.1.38) family.</text>
</comment>
<name>ENTS_SALPA</name>
<keyword id="KW-0997">Cell inner membrane</keyword>
<keyword id="KW-1003">Cell membrane</keyword>
<keyword id="KW-0472">Membrane</keyword>
<keyword id="KW-0812">Transmembrane</keyword>
<keyword id="KW-1133">Transmembrane helix</keyword>
<keyword id="KW-0813">Transport</keyword>
<sequence length="414" mass="43095">MNRQSWLLNLSLLKTHPAFRAVFLARFISIVSLGLLGVAVPVQIQMMTHSTWQVGLSVTLTGGAMFIGLMVGGVLADRYERKKVILLARGTCGIGFIGLCVNALLPEPSLLAIYLLGLWDGFFASLGVTALLAATPALVGRENLMQAGAITMLTVRLGSVISPMLGGILLASGGVAWNYGLAAAGTFITLLPLLTLPRLPVPPQPRENPFLALLAAFRFLLACPLIGGIALLGGLVTMASAVRVLYPALAMSWQMSAAQIGLLYAAIPLGAAIGALTSGQLAHSVRPGLIMLVSTVGSFLAVGLFAIMPVWIAGVICLALFGWLSAISSLLQYTLLQTQTPENMLGRMNGLWTAQNVTGDAIGAALLGGLGAMMTPVASASVSGFGLVIIGLLLLLVLGELRRFRQTSPVSDAG</sequence>
<accession>Q5PME0</accession>
<dbReference type="EMBL" id="CP000026">
    <property type="protein sequence ID" value="AAV78033.1"/>
    <property type="molecule type" value="Genomic_DNA"/>
</dbReference>
<dbReference type="RefSeq" id="WP_001081664.1">
    <property type="nucleotide sequence ID" value="NC_006511.1"/>
</dbReference>
<dbReference type="SMR" id="Q5PME0"/>
<dbReference type="KEGG" id="spt:SPA2141"/>
<dbReference type="HOGENOM" id="CLU_034180_11_0_6"/>
<dbReference type="Proteomes" id="UP000008185">
    <property type="component" value="Chromosome"/>
</dbReference>
<dbReference type="GO" id="GO:0005886">
    <property type="term" value="C:plasma membrane"/>
    <property type="evidence" value="ECO:0007669"/>
    <property type="project" value="UniProtKB-SubCell"/>
</dbReference>
<dbReference type="GO" id="GO:0042931">
    <property type="term" value="F:enterobactin transmembrane transporter activity"/>
    <property type="evidence" value="ECO:0007669"/>
    <property type="project" value="InterPro"/>
</dbReference>
<dbReference type="CDD" id="cd06173">
    <property type="entry name" value="MFS_MefA_like"/>
    <property type="match status" value="1"/>
</dbReference>
<dbReference type="FunFam" id="1.20.1250.20:FF:000056">
    <property type="entry name" value="Enterobactin exporter EntS"/>
    <property type="match status" value="1"/>
</dbReference>
<dbReference type="Gene3D" id="1.20.1250.20">
    <property type="entry name" value="MFS general substrate transporter like domains"/>
    <property type="match status" value="1"/>
</dbReference>
<dbReference type="HAMAP" id="MF_01436">
    <property type="entry name" value="MFS_EntS"/>
    <property type="match status" value="1"/>
</dbReference>
<dbReference type="InterPro" id="IPR023722">
    <property type="entry name" value="Enterobactin_exp_EntS"/>
</dbReference>
<dbReference type="InterPro" id="IPR020846">
    <property type="entry name" value="MFS_dom"/>
</dbReference>
<dbReference type="InterPro" id="IPR036259">
    <property type="entry name" value="MFS_trans_sf"/>
</dbReference>
<dbReference type="InterPro" id="IPR010290">
    <property type="entry name" value="TM_effector"/>
</dbReference>
<dbReference type="NCBIfam" id="NF007792">
    <property type="entry name" value="PRK10489.1"/>
    <property type="match status" value="1"/>
</dbReference>
<dbReference type="PANTHER" id="PTHR23513:SF9">
    <property type="entry name" value="ENTEROBACTIN EXPORTER ENTS"/>
    <property type="match status" value="1"/>
</dbReference>
<dbReference type="PANTHER" id="PTHR23513">
    <property type="entry name" value="INTEGRAL MEMBRANE EFFLUX PROTEIN-RELATED"/>
    <property type="match status" value="1"/>
</dbReference>
<dbReference type="Pfam" id="PF05977">
    <property type="entry name" value="MFS_3"/>
    <property type="match status" value="1"/>
</dbReference>
<dbReference type="SUPFAM" id="SSF103473">
    <property type="entry name" value="MFS general substrate transporter"/>
    <property type="match status" value="1"/>
</dbReference>
<dbReference type="PROSITE" id="PS50850">
    <property type="entry name" value="MFS"/>
    <property type="match status" value="1"/>
</dbReference>
<reference key="1">
    <citation type="journal article" date="2004" name="Nat. Genet.">
        <title>Comparison of genome degradation in Paratyphi A and Typhi, human-restricted serovars of Salmonella enterica that cause typhoid.</title>
        <authorList>
            <person name="McClelland M."/>
            <person name="Sanderson K.E."/>
            <person name="Clifton S.W."/>
            <person name="Latreille P."/>
            <person name="Porwollik S."/>
            <person name="Sabo A."/>
            <person name="Meyer R."/>
            <person name="Bieri T."/>
            <person name="Ozersky P."/>
            <person name="McLellan M."/>
            <person name="Harkins C.R."/>
            <person name="Wang C."/>
            <person name="Nguyen C."/>
            <person name="Berghoff A."/>
            <person name="Elliott G."/>
            <person name="Kohlberg S."/>
            <person name="Strong C."/>
            <person name="Du F."/>
            <person name="Carter J."/>
            <person name="Kremizki C."/>
            <person name="Layman D."/>
            <person name="Leonard S."/>
            <person name="Sun H."/>
            <person name="Fulton L."/>
            <person name="Nash W."/>
            <person name="Miner T."/>
            <person name="Minx P."/>
            <person name="Delehaunty K."/>
            <person name="Fronick C."/>
            <person name="Magrini V."/>
            <person name="Nhan M."/>
            <person name="Warren W."/>
            <person name="Florea L."/>
            <person name="Spieth J."/>
            <person name="Wilson R.K."/>
        </authorList>
    </citation>
    <scope>NUCLEOTIDE SEQUENCE [LARGE SCALE GENOMIC DNA]</scope>
    <source>
        <strain>ATCC 9150 / SARB42</strain>
    </source>
</reference>
<organism>
    <name type="scientific">Salmonella paratyphi A (strain ATCC 9150 / SARB42)</name>
    <dbReference type="NCBI Taxonomy" id="295319"/>
    <lineage>
        <taxon>Bacteria</taxon>
        <taxon>Pseudomonadati</taxon>
        <taxon>Pseudomonadota</taxon>
        <taxon>Gammaproteobacteria</taxon>
        <taxon>Enterobacterales</taxon>
        <taxon>Enterobacteriaceae</taxon>
        <taxon>Salmonella</taxon>
    </lineage>
</organism>
<protein>
    <recommendedName>
        <fullName evidence="1">Enterobactin exporter EntS</fullName>
    </recommendedName>
</protein>